<dbReference type="EMBL" id="AJ627251">
    <property type="protein sequence ID" value="CAF28574.1"/>
    <property type="status" value="ALT_INIT"/>
    <property type="molecule type" value="Genomic_DNA"/>
</dbReference>
<dbReference type="RefSeq" id="YP_053136.2">
    <property type="nucleotide sequence ID" value="NC_006050.1"/>
</dbReference>
<dbReference type="GeneID" id="2896178"/>
<dbReference type="GO" id="GO:0009507">
    <property type="term" value="C:chloroplast"/>
    <property type="evidence" value="ECO:0007669"/>
    <property type="project" value="UniProtKB-SubCell"/>
</dbReference>
<dbReference type="GO" id="GO:0003723">
    <property type="term" value="F:RNA binding"/>
    <property type="evidence" value="ECO:0007669"/>
    <property type="project" value="UniProtKB-KW"/>
</dbReference>
<dbReference type="GO" id="GO:0006397">
    <property type="term" value="P:mRNA processing"/>
    <property type="evidence" value="ECO:0007669"/>
    <property type="project" value="UniProtKB-KW"/>
</dbReference>
<dbReference type="GO" id="GO:0008380">
    <property type="term" value="P:RNA splicing"/>
    <property type="evidence" value="ECO:0007669"/>
    <property type="project" value="UniProtKB-UniRule"/>
</dbReference>
<dbReference type="GO" id="GO:0008033">
    <property type="term" value="P:tRNA processing"/>
    <property type="evidence" value="ECO:0007669"/>
    <property type="project" value="UniProtKB-KW"/>
</dbReference>
<dbReference type="HAMAP" id="MF_01390">
    <property type="entry name" value="MatK"/>
    <property type="match status" value="1"/>
</dbReference>
<dbReference type="InterPro" id="IPR024937">
    <property type="entry name" value="Domain_X"/>
</dbReference>
<dbReference type="InterPro" id="IPR002866">
    <property type="entry name" value="Maturase_MatK"/>
</dbReference>
<dbReference type="InterPro" id="IPR024942">
    <property type="entry name" value="Maturase_MatK_N"/>
</dbReference>
<dbReference type="PANTHER" id="PTHR34811">
    <property type="entry name" value="MATURASE K"/>
    <property type="match status" value="1"/>
</dbReference>
<dbReference type="PANTHER" id="PTHR34811:SF1">
    <property type="entry name" value="MATURASE K"/>
    <property type="match status" value="1"/>
</dbReference>
<dbReference type="Pfam" id="PF01348">
    <property type="entry name" value="Intron_maturas2"/>
    <property type="match status" value="1"/>
</dbReference>
<dbReference type="Pfam" id="PF01824">
    <property type="entry name" value="MatK_N"/>
    <property type="match status" value="1"/>
</dbReference>
<geneLocation type="chloroplast"/>
<gene>
    <name evidence="1" type="primary">matK</name>
</gene>
<organism>
    <name type="scientific">Nymphaea alba</name>
    <name type="common">White water-lily</name>
    <name type="synonym">Castalia alba</name>
    <dbReference type="NCBI Taxonomy" id="34301"/>
    <lineage>
        <taxon>Eukaryota</taxon>
        <taxon>Viridiplantae</taxon>
        <taxon>Streptophyta</taxon>
        <taxon>Embryophyta</taxon>
        <taxon>Tracheophyta</taxon>
        <taxon>Spermatophyta</taxon>
        <taxon>Magnoliopsida</taxon>
        <taxon>Nymphaeales</taxon>
        <taxon>Nymphaeaceae</taxon>
        <taxon>Nymphaea</taxon>
    </lineage>
</organism>
<protein>
    <recommendedName>
        <fullName evidence="1">Maturase K</fullName>
    </recommendedName>
    <alternativeName>
        <fullName evidence="1">Intron maturase</fullName>
    </alternativeName>
</protein>
<name>MATK_NYMAL</name>
<accession>Q6EW67</accession>
<proteinExistence type="inferred from homology"/>
<reference key="1">
    <citation type="journal article" date="2004" name="Mol. Biol. Evol.">
        <title>The chloroplast genome of Nymphaea alba: whole-genome analyses and the problem of identifying the most basal angiosperm.</title>
        <authorList>
            <person name="Goremykin V.V."/>
            <person name="Hirsch-Ernst K.I."/>
            <person name="Woelfl S."/>
            <person name="Hellwig F.H."/>
        </authorList>
    </citation>
    <scope>NUCLEOTIDE SEQUENCE [LARGE SCALE GENOMIC DNA]</scope>
</reference>
<feature type="chain" id="PRO_0000143551" description="Maturase K">
    <location>
        <begin position="1"/>
        <end position="507"/>
    </location>
</feature>
<keyword id="KW-0150">Chloroplast</keyword>
<keyword id="KW-0507">mRNA processing</keyword>
<keyword id="KW-0934">Plastid</keyword>
<keyword id="KW-0694">RNA-binding</keyword>
<keyword id="KW-0819">tRNA processing</keyword>
<sequence length="507" mass="60144">MEKLQYELQGYLEIDRYRKQRFLYPLLFREYIYALAHDHGLNSSIFYEPTENLGYDNDNKSSSLIVKRLITRLHQQNHLTISVNDSRFVGPNRSFYSQTIPEGFAGIMEIPFSVRLVSSLERERIAKYHNLRSIHSIFPFLEDKLSHLYYVSDILIPYPIHLEILLQTLRTRIRDAPSLHLLRCFLHEHHNWNSLITSNKSISIFSKENQRLFLFLYNSHVYECESVLVFLRKQSSHLRSISSLAFLERTHFYGKIKHLVVTPRNDSQRTLPLWFFKEPLMHYVRYQGKSIMASRCTNLLMKKWKYYLVNFWQCHFHLWSQPGRIHINELSNHSFYFLGYLSGVRLTPWVIRSQMLENSFMIDTAIKRFDTIVPIFPLIGSLVKAKFCNVSGYPISKSVWADSSDSDIIARFGWICRNLSHYHSGSSKKHSLCRIKYILRLSCARTLARKHKSTVRAICKRLGSKLLEEFLTEEHEIVSFIFRRTRLRSERIWYLDIIRIHGLVPHS</sequence>
<evidence type="ECO:0000255" key="1">
    <source>
        <dbReference type="HAMAP-Rule" id="MF_01390"/>
    </source>
</evidence>
<evidence type="ECO:0000305" key="2"/>
<comment type="function">
    <text evidence="1">Usually encoded in the trnK tRNA gene intron. Probably assists in splicing its own and other chloroplast group II introns.</text>
</comment>
<comment type="subcellular location">
    <subcellularLocation>
        <location>Plastid</location>
        <location>Chloroplast</location>
    </subcellularLocation>
</comment>
<comment type="similarity">
    <text evidence="1">Belongs to the intron maturase 2 family. MatK subfamily.</text>
</comment>
<comment type="sequence caution" evidence="2">
    <conflict type="erroneous initiation">
        <sequence resource="EMBL-CDS" id="CAF28574"/>
    </conflict>
</comment>